<name>ATPA_BARHE</name>
<evidence type="ECO:0000255" key="1">
    <source>
        <dbReference type="HAMAP-Rule" id="MF_01346"/>
    </source>
</evidence>
<reference key="1">
    <citation type="journal article" date="2004" name="Proc. Natl. Acad. Sci. U.S.A.">
        <title>The louse-borne human pathogen Bartonella quintana is a genomic derivative of the zoonotic agent Bartonella henselae.</title>
        <authorList>
            <person name="Alsmark U.C.M."/>
            <person name="Frank A.C."/>
            <person name="Karlberg E.O."/>
            <person name="Legault B.-A."/>
            <person name="Ardell D.H."/>
            <person name="Canbaeck B."/>
            <person name="Eriksson A.-S."/>
            <person name="Naeslund A.K."/>
            <person name="Handley S.A."/>
            <person name="Huvet M."/>
            <person name="La Scola B."/>
            <person name="Holmberg M."/>
            <person name="Andersson S.G.E."/>
        </authorList>
    </citation>
    <scope>NUCLEOTIDE SEQUENCE [LARGE SCALE GENOMIC DNA]</scope>
    <source>
        <strain>ATCC 49882 / DSM 28221 / CCUG 30454 / Houston 1</strain>
    </source>
</reference>
<accession>Q6G1W7</accession>
<comment type="function">
    <text evidence="1">Produces ATP from ADP in the presence of a proton gradient across the membrane. The alpha chain is a regulatory subunit.</text>
</comment>
<comment type="catalytic activity">
    <reaction evidence="1">
        <text>ATP + H2O + 4 H(+)(in) = ADP + phosphate + 5 H(+)(out)</text>
        <dbReference type="Rhea" id="RHEA:57720"/>
        <dbReference type="ChEBI" id="CHEBI:15377"/>
        <dbReference type="ChEBI" id="CHEBI:15378"/>
        <dbReference type="ChEBI" id="CHEBI:30616"/>
        <dbReference type="ChEBI" id="CHEBI:43474"/>
        <dbReference type="ChEBI" id="CHEBI:456216"/>
        <dbReference type="EC" id="7.1.2.2"/>
    </reaction>
</comment>
<comment type="subunit">
    <text evidence="1">F-type ATPases have 2 components, CF(1) - the catalytic core - and CF(0) - the membrane proton channel. CF(1) has five subunits: alpha(3), beta(3), gamma(1), delta(1), epsilon(1). CF(0) has three main subunits: a(1), b(2) and c(9-12). The alpha and beta chains form an alternating ring which encloses part of the gamma chain. CF(1) is attached to CF(0) by a central stalk formed by the gamma and epsilon chains, while a peripheral stalk is formed by the delta and b chains.</text>
</comment>
<comment type="subcellular location">
    <subcellularLocation>
        <location evidence="1">Cell inner membrane</location>
        <topology evidence="1">Peripheral membrane protein</topology>
    </subcellularLocation>
</comment>
<comment type="similarity">
    <text evidence="1">Belongs to the ATPase alpha/beta chains family.</text>
</comment>
<organism>
    <name type="scientific">Bartonella henselae (strain ATCC 49882 / DSM 28221 / CCUG 30454 / Houston 1)</name>
    <name type="common">Rochalimaea henselae</name>
    <dbReference type="NCBI Taxonomy" id="283166"/>
    <lineage>
        <taxon>Bacteria</taxon>
        <taxon>Pseudomonadati</taxon>
        <taxon>Pseudomonadota</taxon>
        <taxon>Alphaproteobacteria</taxon>
        <taxon>Hyphomicrobiales</taxon>
        <taxon>Bartonellaceae</taxon>
        <taxon>Bartonella</taxon>
    </lineage>
</organism>
<proteinExistence type="inferred from homology"/>
<gene>
    <name evidence="1" type="primary">atpA</name>
    <name type="ordered locus">BH15340</name>
</gene>
<dbReference type="EC" id="7.1.2.2" evidence="1"/>
<dbReference type="EMBL" id="BX897699">
    <property type="protein sequence ID" value="CAF28297.1"/>
    <property type="molecule type" value="Genomic_DNA"/>
</dbReference>
<dbReference type="RefSeq" id="WP_011181300.1">
    <property type="nucleotide sequence ID" value="NZ_LRIJ02000001.1"/>
</dbReference>
<dbReference type="SMR" id="Q6G1W7"/>
<dbReference type="PaxDb" id="283166-BH15340"/>
<dbReference type="EnsemblBacteria" id="CAF28297">
    <property type="protein sequence ID" value="CAF28297"/>
    <property type="gene ID" value="BH15340"/>
</dbReference>
<dbReference type="GeneID" id="92986152"/>
<dbReference type="KEGG" id="bhe:BH15340"/>
<dbReference type="eggNOG" id="COG0056">
    <property type="taxonomic scope" value="Bacteria"/>
</dbReference>
<dbReference type="OrthoDB" id="9803053at2"/>
<dbReference type="Proteomes" id="UP000000421">
    <property type="component" value="Chromosome"/>
</dbReference>
<dbReference type="GO" id="GO:0005886">
    <property type="term" value="C:plasma membrane"/>
    <property type="evidence" value="ECO:0007669"/>
    <property type="project" value="UniProtKB-SubCell"/>
</dbReference>
<dbReference type="GO" id="GO:0045259">
    <property type="term" value="C:proton-transporting ATP synthase complex"/>
    <property type="evidence" value="ECO:0007669"/>
    <property type="project" value="UniProtKB-KW"/>
</dbReference>
<dbReference type="GO" id="GO:0043531">
    <property type="term" value="F:ADP binding"/>
    <property type="evidence" value="ECO:0007669"/>
    <property type="project" value="TreeGrafter"/>
</dbReference>
<dbReference type="GO" id="GO:0005524">
    <property type="term" value="F:ATP binding"/>
    <property type="evidence" value="ECO:0007669"/>
    <property type="project" value="UniProtKB-UniRule"/>
</dbReference>
<dbReference type="GO" id="GO:0046933">
    <property type="term" value="F:proton-transporting ATP synthase activity, rotational mechanism"/>
    <property type="evidence" value="ECO:0007669"/>
    <property type="project" value="UniProtKB-UniRule"/>
</dbReference>
<dbReference type="CDD" id="cd18113">
    <property type="entry name" value="ATP-synt_F1_alpha_C"/>
    <property type="match status" value="1"/>
</dbReference>
<dbReference type="CDD" id="cd18116">
    <property type="entry name" value="ATP-synt_F1_alpha_N"/>
    <property type="match status" value="1"/>
</dbReference>
<dbReference type="CDD" id="cd01132">
    <property type="entry name" value="F1-ATPase_alpha_CD"/>
    <property type="match status" value="1"/>
</dbReference>
<dbReference type="FunFam" id="1.20.150.20:FF:000001">
    <property type="entry name" value="ATP synthase subunit alpha"/>
    <property type="match status" value="1"/>
</dbReference>
<dbReference type="FunFam" id="2.40.30.20:FF:000001">
    <property type="entry name" value="ATP synthase subunit alpha"/>
    <property type="match status" value="1"/>
</dbReference>
<dbReference type="FunFam" id="3.40.50.300:FF:002432">
    <property type="entry name" value="ATP synthase subunit alpha, mitochondrial"/>
    <property type="match status" value="1"/>
</dbReference>
<dbReference type="Gene3D" id="2.40.30.20">
    <property type="match status" value="1"/>
</dbReference>
<dbReference type="Gene3D" id="1.20.150.20">
    <property type="entry name" value="ATP synthase alpha/beta chain, C-terminal domain"/>
    <property type="match status" value="1"/>
</dbReference>
<dbReference type="Gene3D" id="3.40.50.300">
    <property type="entry name" value="P-loop containing nucleotide triphosphate hydrolases"/>
    <property type="match status" value="1"/>
</dbReference>
<dbReference type="HAMAP" id="MF_01346">
    <property type="entry name" value="ATP_synth_alpha_bact"/>
    <property type="match status" value="1"/>
</dbReference>
<dbReference type="InterPro" id="IPR023366">
    <property type="entry name" value="ATP_synth_asu-like_sf"/>
</dbReference>
<dbReference type="InterPro" id="IPR000793">
    <property type="entry name" value="ATP_synth_asu_C"/>
</dbReference>
<dbReference type="InterPro" id="IPR038376">
    <property type="entry name" value="ATP_synth_asu_C_sf"/>
</dbReference>
<dbReference type="InterPro" id="IPR033732">
    <property type="entry name" value="ATP_synth_F1_a_nt-bd_dom"/>
</dbReference>
<dbReference type="InterPro" id="IPR005294">
    <property type="entry name" value="ATP_synth_F1_asu"/>
</dbReference>
<dbReference type="InterPro" id="IPR020003">
    <property type="entry name" value="ATPase_a/bsu_AS"/>
</dbReference>
<dbReference type="InterPro" id="IPR004100">
    <property type="entry name" value="ATPase_F1/V1/A1_a/bsu_N"/>
</dbReference>
<dbReference type="InterPro" id="IPR036121">
    <property type="entry name" value="ATPase_F1/V1/A1_a/bsu_N_sf"/>
</dbReference>
<dbReference type="InterPro" id="IPR000194">
    <property type="entry name" value="ATPase_F1/V1/A1_a/bsu_nucl-bd"/>
</dbReference>
<dbReference type="InterPro" id="IPR027417">
    <property type="entry name" value="P-loop_NTPase"/>
</dbReference>
<dbReference type="NCBIfam" id="TIGR00962">
    <property type="entry name" value="atpA"/>
    <property type="match status" value="1"/>
</dbReference>
<dbReference type="NCBIfam" id="NF009884">
    <property type="entry name" value="PRK13343.1"/>
    <property type="match status" value="1"/>
</dbReference>
<dbReference type="PANTHER" id="PTHR48082">
    <property type="entry name" value="ATP SYNTHASE SUBUNIT ALPHA, MITOCHONDRIAL"/>
    <property type="match status" value="1"/>
</dbReference>
<dbReference type="PANTHER" id="PTHR48082:SF2">
    <property type="entry name" value="ATP SYNTHASE SUBUNIT ALPHA, MITOCHONDRIAL"/>
    <property type="match status" value="1"/>
</dbReference>
<dbReference type="Pfam" id="PF00006">
    <property type="entry name" value="ATP-synt_ab"/>
    <property type="match status" value="1"/>
</dbReference>
<dbReference type="Pfam" id="PF00306">
    <property type="entry name" value="ATP-synt_ab_C"/>
    <property type="match status" value="1"/>
</dbReference>
<dbReference type="Pfam" id="PF02874">
    <property type="entry name" value="ATP-synt_ab_N"/>
    <property type="match status" value="1"/>
</dbReference>
<dbReference type="PIRSF" id="PIRSF039088">
    <property type="entry name" value="F_ATPase_subunit_alpha"/>
    <property type="match status" value="1"/>
</dbReference>
<dbReference type="SUPFAM" id="SSF47917">
    <property type="entry name" value="C-terminal domain of alpha and beta subunits of F1 ATP synthase"/>
    <property type="match status" value="1"/>
</dbReference>
<dbReference type="SUPFAM" id="SSF50615">
    <property type="entry name" value="N-terminal domain of alpha and beta subunits of F1 ATP synthase"/>
    <property type="match status" value="1"/>
</dbReference>
<dbReference type="SUPFAM" id="SSF52540">
    <property type="entry name" value="P-loop containing nucleoside triphosphate hydrolases"/>
    <property type="match status" value="1"/>
</dbReference>
<dbReference type="PROSITE" id="PS00152">
    <property type="entry name" value="ATPASE_ALPHA_BETA"/>
    <property type="match status" value="1"/>
</dbReference>
<sequence>MDIRPSEISKILKEQIKNFDQKAEVSEIGWVLSVGDGIARVYGLDNVQAGEMVSFSNGVRGMALNLEIDNVGVVIFGSDRDIREGDCVKRLGAIVEVPVGPALLGRVVDALGNPIDGKGPLKATEYRRVDVKAPGIIPRQSVHEPMSTGLKAIDALIPIGRGQRELVIGDRQTGKTAILLDAFLNQKPFHEKDAGNEKDKVYCIYVAIGQKRSTVAQFVKVLEERGALEYSIIVAATASDPAPMQFIAPLAGCAMGEYFRDNGQHALIGYDDLSKQAVAYRQMSLLLRRPPGREAYPGDVFYLHSRLLERAAKLNAENGSGSLTALPVIETQANDVSAYIPTNVISITDGQIFLETNLFYQGIRPAVNVGLSVSRVGSAAQIKAMKQVAGSIKGELAQYREMAAFAQFGSDLDASTQRLLNRGARLTELLKQPQFSPLKTEEQVVVIFAGVNGYLDALAVADVGRFEQGLLTLLRSDHSDLLQAIADQKQLTDDIKDKLIVVLNTYAKNFS</sequence>
<keyword id="KW-0066">ATP synthesis</keyword>
<keyword id="KW-0067">ATP-binding</keyword>
<keyword id="KW-0997">Cell inner membrane</keyword>
<keyword id="KW-1003">Cell membrane</keyword>
<keyword id="KW-0139">CF(1)</keyword>
<keyword id="KW-0375">Hydrogen ion transport</keyword>
<keyword id="KW-0406">Ion transport</keyword>
<keyword id="KW-0472">Membrane</keyword>
<keyword id="KW-0547">Nucleotide-binding</keyword>
<keyword id="KW-1278">Translocase</keyword>
<keyword id="KW-0813">Transport</keyword>
<feature type="chain" id="PRO_0000238202" description="ATP synthase subunit alpha">
    <location>
        <begin position="1"/>
        <end position="511"/>
    </location>
</feature>
<feature type="binding site" evidence="1">
    <location>
        <begin position="169"/>
        <end position="176"/>
    </location>
    <ligand>
        <name>ATP</name>
        <dbReference type="ChEBI" id="CHEBI:30616"/>
    </ligand>
</feature>
<feature type="site" description="Required for activity" evidence="1">
    <location>
        <position position="372"/>
    </location>
</feature>
<protein>
    <recommendedName>
        <fullName evidence="1">ATP synthase subunit alpha</fullName>
        <ecNumber evidence="1">7.1.2.2</ecNumber>
    </recommendedName>
    <alternativeName>
        <fullName evidence="1">ATP synthase F1 sector subunit alpha</fullName>
    </alternativeName>
    <alternativeName>
        <fullName evidence="1">F-ATPase subunit alpha</fullName>
    </alternativeName>
</protein>